<feature type="chain" id="PRO_0000341775" description="2-succinyl-5-enolpyruvyl-6-hydroxy-3-cyclohexene-1-carboxylate synthase">
    <location>
        <begin position="1"/>
        <end position="554"/>
    </location>
</feature>
<evidence type="ECO:0000255" key="1">
    <source>
        <dbReference type="HAMAP-Rule" id="MF_01659"/>
    </source>
</evidence>
<sequence length="554" mass="57836">MNPSTTQARVVVDELIRGGVRDVVLCPGSRNAPLAFALQDADRSGRIRLHVRIDERTAGYLAIGLAIGAGAPVCVAMTSGTAVANLGPAVVEANYARVPLIVLSANRPYELLGTGANQTMEQLGYFGTQVRASISLGLAEDAPERTSALNATWRSATCRVLAAATGARTANAGPVHFDIPLREPLVPDPEPLGAVTPPGRPAGKPWTYTPPVTFDQPLDIDLSVDTVVISGHGAGVHPNLAALPTVAEPTAPRSGDNPLHPLALPLLRPQQVIMLGRPTLHRPVSVLLADAEVPVFALTTGPRWPDVSGNSQATGTRAVTTGAPRPAWLDRCAAMNRHAIAAVREQLAAHPLTTGLHVAAAVSHALRPGDQLVLGASNPVRDVALAGLDTRGIRVRSNRGVAGIDGTVSTAIGAALAYEGAHERTGSPDSPPRTIALIGDLTFVHDSSGLLIGPTEPIPRSLTIVVSNDNGGGIFELLEQGDPRFSDVSSRIFGTPHDVDVGALCRAYHVESRQIEVDELGPTLDQPGAGMRVLEVKADRSSLRQLHAAIKAAL</sequence>
<name>MEND_MYCBO</name>
<accession>Q7U1S4</accession>
<accession>A0A1R3XVP4</accession>
<accession>X2BFE4</accession>
<organism>
    <name type="scientific">Mycobacterium bovis (strain ATCC BAA-935 / AF2122/97)</name>
    <dbReference type="NCBI Taxonomy" id="233413"/>
    <lineage>
        <taxon>Bacteria</taxon>
        <taxon>Bacillati</taxon>
        <taxon>Actinomycetota</taxon>
        <taxon>Actinomycetes</taxon>
        <taxon>Mycobacteriales</taxon>
        <taxon>Mycobacteriaceae</taxon>
        <taxon>Mycobacterium</taxon>
        <taxon>Mycobacterium tuberculosis complex</taxon>
    </lineage>
</organism>
<keyword id="KW-0460">Magnesium</keyword>
<keyword id="KW-0464">Manganese</keyword>
<keyword id="KW-0474">Menaquinone biosynthesis</keyword>
<keyword id="KW-0479">Metal-binding</keyword>
<keyword id="KW-1185">Reference proteome</keyword>
<keyword id="KW-0786">Thiamine pyrophosphate</keyword>
<keyword id="KW-0808">Transferase</keyword>
<comment type="function">
    <text evidence="1">Catalyzes the thiamine diphosphate-dependent decarboxylation of 2-oxoglutarate and the subsequent addition of the resulting succinic semialdehyde-thiamine pyrophosphate anion to isochorismate to yield 2-succinyl-5-enolpyruvyl-6-hydroxy-3-cyclohexene-1-carboxylate (SEPHCHC).</text>
</comment>
<comment type="catalytic activity">
    <reaction evidence="1">
        <text>isochorismate + 2-oxoglutarate + H(+) = 5-enolpyruvoyl-6-hydroxy-2-succinyl-cyclohex-3-ene-1-carboxylate + CO2</text>
        <dbReference type="Rhea" id="RHEA:25593"/>
        <dbReference type="ChEBI" id="CHEBI:15378"/>
        <dbReference type="ChEBI" id="CHEBI:16526"/>
        <dbReference type="ChEBI" id="CHEBI:16810"/>
        <dbReference type="ChEBI" id="CHEBI:29780"/>
        <dbReference type="ChEBI" id="CHEBI:58818"/>
        <dbReference type="EC" id="2.2.1.9"/>
    </reaction>
</comment>
<comment type="cofactor">
    <cofactor evidence="1">
        <name>Mg(2+)</name>
        <dbReference type="ChEBI" id="CHEBI:18420"/>
    </cofactor>
    <cofactor evidence="1">
        <name>Mn(2+)</name>
        <dbReference type="ChEBI" id="CHEBI:29035"/>
    </cofactor>
</comment>
<comment type="cofactor">
    <cofactor evidence="1">
        <name>thiamine diphosphate</name>
        <dbReference type="ChEBI" id="CHEBI:58937"/>
    </cofactor>
    <text evidence="1">Binds 1 thiamine pyrophosphate per subunit.</text>
</comment>
<comment type="pathway">
    <text evidence="1">Quinol/quinone metabolism; 1,4-dihydroxy-2-naphthoate biosynthesis; 1,4-dihydroxy-2-naphthoate from chorismate: step 2/7.</text>
</comment>
<comment type="pathway">
    <text evidence="1">Quinol/quinone metabolism; menaquinone biosynthesis.</text>
</comment>
<comment type="subunit">
    <text evidence="1">Homodimer.</text>
</comment>
<comment type="similarity">
    <text evidence="1">Belongs to the TPP enzyme family. MenD subfamily.</text>
</comment>
<gene>
    <name evidence="1" type="primary">menD</name>
    <name type="ordered locus">BQ2027_MB0570</name>
</gene>
<proteinExistence type="inferred from homology"/>
<protein>
    <recommendedName>
        <fullName evidence="1">2-succinyl-5-enolpyruvyl-6-hydroxy-3-cyclohexene-1-carboxylate synthase</fullName>
        <shortName evidence="1">SEPHCHC synthase</shortName>
        <ecNumber evidence="1">2.2.1.9</ecNumber>
    </recommendedName>
    <alternativeName>
        <fullName evidence="1">Menaquinone biosynthesis protein MenD</fullName>
    </alternativeName>
</protein>
<reference key="1">
    <citation type="journal article" date="2003" name="Proc. Natl. Acad. Sci. U.S.A.">
        <title>The complete genome sequence of Mycobacterium bovis.</title>
        <authorList>
            <person name="Garnier T."/>
            <person name="Eiglmeier K."/>
            <person name="Camus J.-C."/>
            <person name="Medina N."/>
            <person name="Mansoor H."/>
            <person name="Pryor M."/>
            <person name="Duthoy S."/>
            <person name="Grondin S."/>
            <person name="Lacroix C."/>
            <person name="Monsempe C."/>
            <person name="Simon S."/>
            <person name="Harris B."/>
            <person name="Atkin R."/>
            <person name="Doggett J."/>
            <person name="Mayes R."/>
            <person name="Keating L."/>
            <person name="Wheeler P.R."/>
            <person name="Parkhill J."/>
            <person name="Barrell B.G."/>
            <person name="Cole S.T."/>
            <person name="Gordon S.V."/>
            <person name="Hewinson R.G."/>
        </authorList>
    </citation>
    <scope>NUCLEOTIDE SEQUENCE [LARGE SCALE GENOMIC DNA]</scope>
    <source>
        <strain>ATCC BAA-935 / AF2122/97</strain>
    </source>
</reference>
<reference key="2">
    <citation type="journal article" date="2017" name="Genome Announc.">
        <title>Updated reference genome sequence and annotation of Mycobacterium bovis AF2122/97.</title>
        <authorList>
            <person name="Malone K.M."/>
            <person name="Farrell D."/>
            <person name="Stuber T.P."/>
            <person name="Schubert O.T."/>
            <person name="Aebersold R."/>
            <person name="Robbe-Austerman S."/>
            <person name="Gordon S.V."/>
        </authorList>
    </citation>
    <scope>NUCLEOTIDE SEQUENCE [LARGE SCALE GENOMIC DNA]</scope>
    <scope>GENOME REANNOTATION</scope>
    <source>
        <strain>ATCC BAA-935 / AF2122/97</strain>
    </source>
</reference>
<dbReference type="EC" id="2.2.1.9" evidence="1"/>
<dbReference type="EMBL" id="LT708304">
    <property type="protein sequence ID" value="SIT99166.1"/>
    <property type="molecule type" value="Genomic_DNA"/>
</dbReference>
<dbReference type="RefSeq" id="NP_854230.1">
    <property type="nucleotide sequence ID" value="NC_002945.3"/>
</dbReference>
<dbReference type="RefSeq" id="WP_003402927.1">
    <property type="nucleotide sequence ID" value="NC_002945.4"/>
</dbReference>
<dbReference type="SMR" id="Q7U1S4"/>
<dbReference type="PATRIC" id="fig|233413.5.peg.618"/>
<dbReference type="UniPathway" id="UPA00079"/>
<dbReference type="UniPathway" id="UPA01057">
    <property type="reaction ID" value="UER00164"/>
</dbReference>
<dbReference type="Proteomes" id="UP000001419">
    <property type="component" value="Chromosome"/>
</dbReference>
<dbReference type="GO" id="GO:0070204">
    <property type="term" value="F:2-succinyl-5-enolpyruvyl-6-hydroxy-3-cyclohexene-1-carboxylic-acid synthase activity"/>
    <property type="evidence" value="ECO:0007669"/>
    <property type="project" value="UniProtKB-UniRule"/>
</dbReference>
<dbReference type="GO" id="GO:0000287">
    <property type="term" value="F:magnesium ion binding"/>
    <property type="evidence" value="ECO:0007669"/>
    <property type="project" value="UniProtKB-UniRule"/>
</dbReference>
<dbReference type="GO" id="GO:0030145">
    <property type="term" value="F:manganese ion binding"/>
    <property type="evidence" value="ECO:0007669"/>
    <property type="project" value="UniProtKB-UniRule"/>
</dbReference>
<dbReference type="GO" id="GO:0030976">
    <property type="term" value="F:thiamine pyrophosphate binding"/>
    <property type="evidence" value="ECO:0007669"/>
    <property type="project" value="UniProtKB-UniRule"/>
</dbReference>
<dbReference type="GO" id="GO:0009234">
    <property type="term" value="P:menaquinone biosynthetic process"/>
    <property type="evidence" value="ECO:0007669"/>
    <property type="project" value="UniProtKB-UniRule"/>
</dbReference>
<dbReference type="CDD" id="cd07037">
    <property type="entry name" value="TPP_PYR_MenD"/>
    <property type="match status" value="1"/>
</dbReference>
<dbReference type="CDD" id="cd02009">
    <property type="entry name" value="TPP_SHCHC_synthase"/>
    <property type="match status" value="1"/>
</dbReference>
<dbReference type="FunFam" id="3.40.50.970:FF:000066">
    <property type="entry name" value="2-succinyl-5-enolpyruvyl-6-hydroxy-3-cyclohexene-1-carboxylate synthase"/>
    <property type="match status" value="1"/>
</dbReference>
<dbReference type="FunFam" id="3.40.50.970:FF:000068">
    <property type="entry name" value="2-succinyl-5-enolpyruvyl-6-hydroxy-3-cyclohexene-1-carboxylate synthase"/>
    <property type="match status" value="1"/>
</dbReference>
<dbReference type="Gene3D" id="3.40.50.970">
    <property type="match status" value="2"/>
</dbReference>
<dbReference type="Gene3D" id="3.40.50.1220">
    <property type="entry name" value="TPP-binding domain"/>
    <property type="match status" value="1"/>
</dbReference>
<dbReference type="HAMAP" id="MF_01659">
    <property type="entry name" value="MenD"/>
    <property type="match status" value="1"/>
</dbReference>
<dbReference type="InterPro" id="IPR004433">
    <property type="entry name" value="MenaQ_synth_MenD"/>
</dbReference>
<dbReference type="InterPro" id="IPR029061">
    <property type="entry name" value="THDP-binding"/>
</dbReference>
<dbReference type="InterPro" id="IPR012001">
    <property type="entry name" value="Thiamin_PyroP_enz_TPP-bd_dom"/>
</dbReference>
<dbReference type="NCBIfam" id="TIGR00173">
    <property type="entry name" value="menD"/>
    <property type="match status" value="1"/>
</dbReference>
<dbReference type="PANTHER" id="PTHR42916">
    <property type="entry name" value="2-SUCCINYL-5-ENOLPYRUVYL-6-HYDROXY-3-CYCLOHEXENE-1-CARBOXYLATE SYNTHASE"/>
    <property type="match status" value="1"/>
</dbReference>
<dbReference type="PANTHER" id="PTHR42916:SF1">
    <property type="entry name" value="PROTEIN PHYLLO, CHLOROPLASTIC"/>
    <property type="match status" value="1"/>
</dbReference>
<dbReference type="Pfam" id="PF02776">
    <property type="entry name" value="TPP_enzyme_N"/>
    <property type="match status" value="1"/>
</dbReference>
<dbReference type="PIRSF" id="PIRSF004983">
    <property type="entry name" value="MenD"/>
    <property type="match status" value="1"/>
</dbReference>
<dbReference type="SUPFAM" id="SSF52518">
    <property type="entry name" value="Thiamin diphosphate-binding fold (THDP-binding)"/>
    <property type="match status" value="2"/>
</dbReference>